<keyword id="KW-0903">Direct protein sequencing</keyword>
<keyword id="KW-0946">Virion</keyword>
<name>IGLVP_BPSK9</name>
<organism>
    <name type="scientific">Serratia phage KSP90</name>
    <name type="common">Serratia marcescens bacteriophage KSP90</name>
    <dbReference type="NCBI Taxonomy" id="552528"/>
    <lineage>
        <taxon>Viruses</taxon>
        <taxon>Duplodnaviria</taxon>
        <taxon>Heunggongvirae</taxon>
        <taxon>Uroviricota</taxon>
        <taxon>Caudoviricetes</taxon>
        <taxon>Ackermannviridae</taxon>
        <taxon>Miltonvirus</taxon>
    </lineage>
</organism>
<comment type="subcellular location">
    <subcellularLocation>
        <location evidence="2">Virion</location>
    </subcellularLocation>
</comment>
<feature type="initiator methionine" description="Removed" evidence="2">
    <location>
        <position position="1"/>
    </location>
</feature>
<feature type="chain" id="PRO_0000351157" description="Ig-like virion protein" evidence="2">
    <location>
        <begin position="2"/>
        <end position="258"/>
    </location>
</feature>
<feature type="domain" description="BIG2 1" evidence="1">
    <location>
        <begin position="89"/>
        <end position="149"/>
    </location>
</feature>
<feature type="domain" description="BIG2 2" evidence="1">
    <location>
        <begin position="176"/>
        <end position="253"/>
    </location>
</feature>
<organismHost>
    <name type="scientific">Serratia marcescens</name>
    <dbReference type="NCBI Taxonomy" id="615"/>
</organismHost>
<sequence length="258" mass="26534">MPKIKILVTPYVVKNKPETERNHVVTGVADGWEKTSLNADPNEILTESKGLDTLLTDCNLKPDGVTKIDPSKPIGKEVEIEIYDPDAIPVQTVTVSPDTATGTVGQQLTFTADILPADATYKDVEWSSSDEAKAKSLGNGVFDLKAVGTGIIVSATSIDGGVIGEAELTITAAVVAVTGVTLSPKTKTIAVGEKFTLAATVAPANATNKTVTYTSADPATATVNATTGEVEGKASGTVAITGKTADGNKTDVCNVTVS</sequence>
<proteinExistence type="evidence at protein level"/>
<evidence type="ECO:0000255" key="1"/>
<evidence type="ECO:0000269" key="2">
    <source>
    </source>
</evidence>
<evidence type="ECO:0000303" key="3">
    <source>
    </source>
</evidence>
<evidence type="ECO:0000305" key="4"/>
<evidence type="ECO:0000312" key="5">
    <source>
        <dbReference type="EMBL" id="BAH15178.1"/>
    </source>
</evidence>
<protein>
    <recommendedName>
        <fullName evidence="5">Ig-like virion protein</fullName>
    </recommendedName>
    <alternativeName>
        <fullName evidence="3">Virion protein E</fullName>
    </alternativeName>
</protein>
<accession>P85991</accession>
<accession>B9A7D2</accession>
<reference evidence="4 5" key="1">
    <citation type="journal article" date="2009" name="FEMS Microbiol. Lett.">
        <title>Morphological and genetic analysis of three bacteriophages of Serratia marcescens isolated from environmental water.</title>
        <authorList>
            <person name="Matsushita K."/>
            <person name="Uchiyama J."/>
            <person name="Kato S."/>
            <person name="Ujihara T."/>
            <person name="Hoshiba H."/>
            <person name="Sugihara S."/>
            <person name="Muraoka A."/>
            <person name="Wakiguchi H."/>
            <person name="Matsuzaki S."/>
        </authorList>
    </citation>
    <scope>NUCLEOTIDE SEQUENCE [GENOMIC DNA]</scope>
    <scope>PROTEIN SEQUENCE OF 2-17</scope>
</reference>
<dbReference type="EMBL" id="AB452991">
    <property type="protein sequence ID" value="BAH15178.1"/>
    <property type="molecule type" value="Genomic_DNA"/>
</dbReference>
<dbReference type="SMR" id="P85991"/>
<dbReference type="GO" id="GO:0044423">
    <property type="term" value="C:virion component"/>
    <property type="evidence" value="ECO:0007669"/>
    <property type="project" value="UniProtKB-KW"/>
</dbReference>
<dbReference type="Gene3D" id="2.60.40.1080">
    <property type="match status" value="2"/>
</dbReference>
<dbReference type="InterPro" id="IPR003343">
    <property type="entry name" value="Big_2"/>
</dbReference>
<dbReference type="InterPro" id="IPR008964">
    <property type="entry name" value="Invasin/intimin_cell_adhesion"/>
</dbReference>
<dbReference type="Pfam" id="PF02368">
    <property type="entry name" value="Big_2"/>
    <property type="match status" value="2"/>
</dbReference>
<dbReference type="SMART" id="SM00635">
    <property type="entry name" value="BID_2"/>
    <property type="match status" value="2"/>
</dbReference>
<dbReference type="SUPFAM" id="SSF49373">
    <property type="entry name" value="Invasin/intimin cell-adhesion fragments"/>
    <property type="match status" value="2"/>
</dbReference>